<protein>
    <recommendedName>
        <fullName evidence="3">Mevalonyl-coenzyme A hydratase SIDH</fullName>
        <ecNumber evidence="5">4.2.1.-</ecNumber>
    </recommendedName>
    <alternativeName>
        <fullName evidence="3">Siderophore biosynthesis cluster protein H</fullName>
    </alternativeName>
</protein>
<dbReference type="EC" id="4.2.1.-" evidence="5"/>
<dbReference type="EMBL" id="JH725179">
    <property type="protein sequence ID" value="EJP62989.1"/>
    <property type="molecule type" value="Genomic_DNA"/>
</dbReference>
<dbReference type="RefSeq" id="XP_008601319.1">
    <property type="nucleotide sequence ID" value="XM_008603097.1"/>
</dbReference>
<dbReference type="SMR" id="J4KLY0"/>
<dbReference type="STRING" id="655819.J4KLY0"/>
<dbReference type="GeneID" id="19891012"/>
<dbReference type="HOGENOM" id="CLU_009834_7_6_1"/>
<dbReference type="InParanoid" id="J4KLY0"/>
<dbReference type="OrthoDB" id="3848at474943"/>
<dbReference type="Proteomes" id="UP000002762">
    <property type="component" value="Unassembled WGS sequence"/>
</dbReference>
<dbReference type="GO" id="GO:0005739">
    <property type="term" value="C:mitochondrion"/>
    <property type="evidence" value="ECO:0007669"/>
    <property type="project" value="TreeGrafter"/>
</dbReference>
<dbReference type="GO" id="GO:0005777">
    <property type="term" value="C:peroxisome"/>
    <property type="evidence" value="ECO:0007669"/>
    <property type="project" value="UniProtKB-SubCell"/>
</dbReference>
<dbReference type="GO" id="GO:0016853">
    <property type="term" value="F:isomerase activity"/>
    <property type="evidence" value="ECO:0007669"/>
    <property type="project" value="UniProtKB-KW"/>
</dbReference>
<dbReference type="GO" id="GO:0016829">
    <property type="term" value="F:lyase activity"/>
    <property type="evidence" value="ECO:0007669"/>
    <property type="project" value="UniProtKB-KW"/>
</dbReference>
<dbReference type="GO" id="GO:0006635">
    <property type="term" value="P:fatty acid beta-oxidation"/>
    <property type="evidence" value="ECO:0007669"/>
    <property type="project" value="TreeGrafter"/>
</dbReference>
<dbReference type="CDD" id="cd06558">
    <property type="entry name" value="crotonase-like"/>
    <property type="match status" value="1"/>
</dbReference>
<dbReference type="FunFam" id="3.90.226.10:FF:000074">
    <property type="entry name" value="Enoyl-CoA hydratase (AFU_orthologue AFUA_2G10650)"/>
    <property type="match status" value="1"/>
</dbReference>
<dbReference type="Gene3D" id="3.90.226.10">
    <property type="entry name" value="2-enoyl-CoA Hydratase, Chain A, domain 1"/>
    <property type="match status" value="1"/>
</dbReference>
<dbReference type="Gene3D" id="1.10.12.10">
    <property type="entry name" value="Lyase 2-enoyl-coa Hydratase, Chain A, domain 2"/>
    <property type="match status" value="1"/>
</dbReference>
<dbReference type="InterPro" id="IPR029045">
    <property type="entry name" value="ClpP/crotonase-like_dom_sf"/>
</dbReference>
<dbReference type="InterPro" id="IPR018376">
    <property type="entry name" value="Enoyl-CoA_hyd/isom_CS"/>
</dbReference>
<dbReference type="InterPro" id="IPR001753">
    <property type="entry name" value="Enoyl-CoA_hydra/iso"/>
</dbReference>
<dbReference type="InterPro" id="IPR014748">
    <property type="entry name" value="Enoyl-CoA_hydra_C"/>
</dbReference>
<dbReference type="PANTHER" id="PTHR11941:SF158">
    <property type="entry name" value="ENOYL-COA HYDRATASE (AFU_ORTHOLOGUE AFUA_2G10650)"/>
    <property type="match status" value="1"/>
</dbReference>
<dbReference type="PANTHER" id="PTHR11941">
    <property type="entry name" value="ENOYL-COA HYDRATASE-RELATED"/>
    <property type="match status" value="1"/>
</dbReference>
<dbReference type="Pfam" id="PF00378">
    <property type="entry name" value="ECH_1"/>
    <property type="match status" value="1"/>
</dbReference>
<dbReference type="SUPFAM" id="SSF52096">
    <property type="entry name" value="ClpP/crotonase"/>
    <property type="match status" value="1"/>
</dbReference>
<dbReference type="PROSITE" id="PS00166">
    <property type="entry name" value="ENOYL_COA_HYDRATASE"/>
    <property type="match status" value="1"/>
</dbReference>
<proteinExistence type="inferred from homology"/>
<reference key="1">
    <citation type="journal article" date="2012" name="Sci. Rep.">
        <title>Genomic perspectives on the evolution of fungal entomopathogenicity in Beauveria bassiana.</title>
        <authorList>
            <person name="Xiao G."/>
            <person name="Ying S.-H."/>
            <person name="Zheng P."/>
            <person name="Wang Z.-L."/>
            <person name="Zhang S."/>
            <person name="Xie X.-Q."/>
            <person name="Shang Y."/>
            <person name="St Leger R.J."/>
            <person name="Zhao G.-P."/>
            <person name="Wang C."/>
            <person name="Feng M.-G."/>
        </authorList>
    </citation>
    <scope>NUCLEOTIDE SEQUENCE [LARGE SCALE GENOMIC DNA]</scope>
    <source>
        <strain>ARSEF 2860</strain>
    </source>
</reference>
<reference key="2">
    <citation type="journal article" date="2024" name="J. Agric. Food Chem.">
        <title>Unlocking the siderophore biosynthesis pathway and its biological functions in the fungal insect pathogen Beauveria bassiana.</title>
        <authorList>
            <person name="Sun T.F."/>
            <person name="Ge Z.W."/>
            <person name="Xu H.R."/>
            <person name="Zhang H."/>
            <person name="Huang S.S."/>
            <person name="Feng M.G."/>
            <person name="Ying S.H."/>
        </authorList>
    </citation>
    <scope>FUNCTION</scope>
    <scope>DISRUPTION PHENOTYPE</scope>
    <scope>PATHWAY</scope>
</reference>
<feature type="chain" id="PRO_0000461399" description="Mevalonyl-coenzyme A hydratase SIDH">
    <location>
        <begin position="1"/>
        <end position="280"/>
    </location>
</feature>
<feature type="short sequence motif" description="PTS1-type peroxisomal targeting signal" evidence="1">
    <location>
        <begin position="278"/>
        <end position="280"/>
    </location>
</feature>
<sequence>MTFTKQPPAVHDTDISFPQPHVLVVTLNRPKAFNAIPRPLHPQLAALWAWYDAEPSLRCAVLTGAGKAFCAGADLKEWNDKAAAGQAIGAAGERDPSWATSGFGGLSNRRGKKPVIAAVNGLCLGGGMEMALAADMIVAAAAARFGLPEVKIGVVAVAGALPRLTRIVGRQRASEMALLGRTYAAEEMRSWGVVNHIVPEGGSVVDEALRWAGELAGNSPDSVIVTRAGLLGGWDPVDPVKSTQEIDEGIYKLLEAGENQKEGVKSFVEKRRPVWKDSKL</sequence>
<comment type="function">
    <text evidence="1 2">Mevalonyl-coenzyme A hydratase; part of the gene cluster that mediates the biosynthesis of at least 11 siderophores, including beauverichelin A, dimerumic acid (DA), Na-dimethyl coprogen (NADC), eleutherazine B, ferricrocin (FC), fusarinine A, fusarinine C (FsC), metachelin A, mevalonolactone, rhodotorulic acid (RA) and tenellin (PubMed:39109629). This cocktail of siderophores for iron metabolism is essential for virulence, and more specifically for the fungal virulence in penetrating through the host cuticle (PubMed:39109629). Siderophore synthesis is also involved in conidial germination under iron-deficient conditions (PubMed:39109629). For biosynthesis of fusarinine C, the transacylase SIDF transfers anhydromevalonyl to N(5)-hydroxyornithine. The required anhydromevalonyl-CoA moiety is derived from mevalonate by CoA ligation and dehydration catalyzed by SIDI and sidH respectively (By similarity). SIDH is not essential for siderophore production, probably due to functional redundancy of this protein family, as there are 15 homologs of SIDH in B.bassiana (PubMed:39109629).</text>
</comment>
<comment type="pathway">
    <text evidence="2">Siderophore biosynthesis.</text>
</comment>
<comment type="subcellular location">
    <subcellularLocation>
        <location evidence="1">Peroxisome</location>
    </subcellularLocation>
    <text evidence="1">Targeted to peroxisomes via its PTS1-type peroxisomal targeting signal and the corresponding receptor pexE.</text>
</comment>
<comment type="disruption phenotype">
    <text evidence="2">Does not affect conidial germination, sensitivity to oxidative stress and iron-starvation, nor virulence.</text>
</comment>
<comment type="similarity">
    <text evidence="4">Belongs to the enoyl-CoA hydratase/isomerase family.</text>
</comment>
<gene>
    <name evidence="3" type="primary">SIDH</name>
    <name type="ORF">BBA_08000</name>
</gene>
<name>SIDH_BEAB2</name>
<accession>J4KLY0</accession>
<keyword id="KW-0413">Isomerase</keyword>
<keyword id="KW-0456">Lyase</keyword>
<keyword id="KW-0576">Peroxisome</keyword>
<keyword id="KW-1185">Reference proteome</keyword>
<keyword id="KW-0843">Virulence</keyword>
<organism>
    <name type="scientific">Beauveria bassiana (strain ARSEF 2860)</name>
    <name type="common">White muscardine disease fungus</name>
    <name type="synonym">Tritirachium shiotae</name>
    <dbReference type="NCBI Taxonomy" id="655819"/>
    <lineage>
        <taxon>Eukaryota</taxon>
        <taxon>Fungi</taxon>
        <taxon>Dikarya</taxon>
        <taxon>Ascomycota</taxon>
        <taxon>Pezizomycotina</taxon>
        <taxon>Sordariomycetes</taxon>
        <taxon>Hypocreomycetidae</taxon>
        <taxon>Hypocreales</taxon>
        <taxon>Cordycipitaceae</taxon>
        <taxon>Beauveria</taxon>
    </lineage>
</organism>
<evidence type="ECO:0000250" key="1">
    <source>
        <dbReference type="UniProtKB" id="Q4WF54"/>
    </source>
</evidence>
<evidence type="ECO:0000269" key="2">
    <source>
    </source>
</evidence>
<evidence type="ECO:0000303" key="3">
    <source>
    </source>
</evidence>
<evidence type="ECO:0000305" key="4"/>
<evidence type="ECO:0000305" key="5">
    <source>
    </source>
</evidence>